<feature type="chain" id="PRO_0000159950" description="Superoxide dismutase [Mn], mitochondrial">
    <location>
        <begin position="1"/>
        <end position="13" status="greater than"/>
    </location>
</feature>
<feature type="non-terminal residue">
    <location>
        <position position="13"/>
    </location>
</feature>
<proteinExistence type="evidence at protein level"/>
<dbReference type="EC" id="1.15.1.1"/>
<dbReference type="InParanoid" id="P54712"/>
<dbReference type="OrthoDB" id="239262at2759"/>
<dbReference type="Proteomes" id="UP000002254">
    <property type="component" value="Unplaced"/>
</dbReference>
<dbReference type="Proteomes" id="UP000694429">
    <property type="component" value="Unplaced"/>
</dbReference>
<dbReference type="Proteomes" id="UP000694542">
    <property type="component" value="Unplaced"/>
</dbReference>
<dbReference type="Proteomes" id="UP000805418">
    <property type="component" value="Unplaced"/>
</dbReference>
<dbReference type="GO" id="GO:0005759">
    <property type="term" value="C:mitochondrial matrix"/>
    <property type="evidence" value="ECO:0007669"/>
    <property type="project" value="UniProtKB-SubCell"/>
</dbReference>
<dbReference type="GO" id="GO:0030145">
    <property type="term" value="F:manganese ion binding"/>
    <property type="evidence" value="ECO:0000250"/>
    <property type="project" value="UniProtKB"/>
</dbReference>
<dbReference type="GO" id="GO:0004784">
    <property type="term" value="F:superoxide dismutase activity"/>
    <property type="evidence" value="ECO:0000250"/>
    <property type="project" value="UniProtKB"/>
</dbReference>
<comment type="function">
    <text evidence="3">Destroys superoxide anion radicals which are normally produced within the cells and which are toxic to biological systems.</text>
</comment>
<comment type="catalytic activity">
    <reaction>
        <text>2 superoxide + 2 H(+) = H2O2 + O2</text>
        <dbReference type="Rhea" id="RHEA:20696"/>
        <dbReference type="ChEBI" id="CHEBI:15378"/>
        <dbReference type="ChEBI" id="CHEBI:15379"/>
        <dbReference type="ChEBI" id="CHEBI:16240"/>
        <dbReference type="ChEBI" id="CHEBI:18421"/>
        <dbReference type="EC" id="1.15.1.1"/>
    </reaction>
</comment>
<comment type="cofactor">
    <cofactor evidence="2">
        <name>Mn(2+)</name>
        <dbReference type="ChEBI" id="CHEBI:29035"/>
    </cofactor>
    <text evidence="2">Binds 1 Mn(2+) ion per subunit.</text>
</comment>
<comment type="subunit">
    <text evidence="1">Homotetramer.</text>
</comment>
<comment type="subcellular location">
    <subcellularLocation>
        <location>Mitochondrion matrix</location>
    </subcellularLocation>
</comment>
<comment type="PTM">
    <text evidence="3">Nitrated under oxidative stress. Nitration coupled with oxidation inhibits the catalytic activity.</text>
</comment>
<comment type="PTM">
    <text evidence="2">Acetylation at Lys-122 decreases enzymatic activity. Deacetylated by SIRT3 upon exposure to ionizing radiations or after long fasting (By similarity).</text>
</comment>
<comment type="PTM">
    <text evidence="2">Polyubiquitinated; leading to proteasomal degradation. Deubiquitinated by USP36 which increases protein stability.</text>
</comment>
<comment type="similarity">
    <text evidence="4">Belongs to the iron/manganese superoxide dismutase family.</text>
</comment>
<organism>
    <name type="scientific">Canis lupus familiaris</name>
    <name type="common">Dog</name>
    <name type="synonym">Canis familiaris</name>
    <dbReference type="NCBI Taxonomy" id="9615"/>
    <lineage>
        <taxon>Eukaryota</taxon>
        <taxon>Metazoa</taxon>
        <taxon>Chordata</taxon>
        <taxon>Craniata</taxon>
        <taxon>Vertebrata</taxon>
        <taxon>Euteleostomi</taxon>
        <taxon>Mammalia</taxon>
        <taxon>Eutheria</taxon>
        <taxon>Laurasiatheria</taxon>
        <taxon>Carnivora</taxon>
        <taxon>Caniformia</taxon>
        <taxon>Canidae</taxon>
        <taxon>Canis</taxon>
    </lineage>
</organism>
<reference key="1">
    <citation type="journal article" date="1997" name="Electrophoresis">
        <title>HSC-2DPAGE and the two-dimensional gel electrophoresis database of dog heart proteins.</title>
        <authorList>
            <person name="Dunn M.J."/>
            <person name="Corbett J.M."/>
            <person name="Wheeler C.H."/>
        </authorList>
    </citation>
    <scope>PROTEIN SEQUENCE</scope>
    <source>
        <tissue>Heart</tissue>
    </source>
</reference>
<protein>
    <recommendedName>
        <fullName>Superoxide dismutase [Mn], mitochondrial</fullName>
        <ecNumber>1.15.1.1</ecNumber>
    </recommendedName>
</protein>
<gene>
    <name type="primary">SOD2</name>
</gene>
<name>SODM_CANLF</name>
<keyword id="KW-0903">Direct protein sequencing</keyword>
<keyword id="KW-0464">Manganese</keyword>
<keyword id="KW-0479">Metal-binding</keyword>
<keyword id="KW-0496">Mitochondrion</keyword>
<keyword id="KW-0944">Nitration</keyword>
<keyword id="KW-0560">Oxidoreductase</keyword>
<keyword id="KW-1185">Reference proteome</keyword>
<keyword id="KW-0832">Ubl conjugation</keyword>
<accession>P54712</accession>
<evidence type="ECO:0000250" key="1"/>
<evidence type="ECO:0000250" key="2">
    <source>
        <dbReference type="UniProtKB" id="P04179"/>
    </source>
</evidence>
<evidence type="ECO:0000250" key="3">
    <source>
        <dbReference type="UniProtKB" id="P07895"/>
    </source>
</evidence>
<evidence type="ECO:0000305" key="4"/>
<sequence>KHSLPDLPYDYGA</sequence>